<name>OM25_BRUO2</name>
<dbReference type="EMBL" id="U33004">
    <property type="protein sequence ID" value="AAB06702.1"/>
    <property type="molecule type" value="Genomic_DNA"/>
</dbReference>
<dbReference type="EMBL" id="CP000708">
    <property type="protein sequence ID" value="ABQ61895.1"/>
    <property type="molecule type" value="Genomic_DNA"/>
</dbReference>
<dbReference type="RefSeq" id="WP_006012064.1">
    <property type="nucleotide sequence ID" value="NC_009505.1"/>
</dbReference>
<dbReference type="SMR" id="Q45335"/>
<dbReference type="GeneID" id="45124148"/>
<dbReference type="KEGG" id="bov:BOV_0692"/>
<dbReference type="HOGENOM" id="CLU_037100_4_0_5"/>
<dbReference type="PhylomeDB" id="Q45335"/>
<dbReference type="PRO" id="PR:Q45335"/>
<dbReference type="Proteomes" id="UP000006383">
    <property type="component" value="Chromosome I"/>
</dbReference>
<dbReference type="GO" id="GO:0009279">
    <property type="term" value="C:cell outer membrane"/>
    <property type="evidence" value="ECO:0007669"/>
    <property type="project" value="UniProtKB-SubCell"/>
</dbReference>
<dbReference type="GO" id="GO:0052026">
    <property type="term" value="P:symbiont-mediated perturbation of host transcription"/>
    <property type="evidence" value="ECO:0000269"/>
    <property type="project" value="SigSci"/>
</dbReference>
<dbReference type="Gene3D" id="2.40.160.20">
    <property type="match status" value="1"/>
</dbReference>
<dbReference type="InterPro" id="IPR051692">
    <property type="entry name" value="OMP-like"/>
</dbReference>
<dbReference type="InterPro" id="IPR011250">
    <property type="entry name" value="OMP/PagP_b-brl"/>
</dbReference>
<dbReference type="InterPro" id="IPR027385">
    <property type="entry name" value="OMP_b-brl"/>
</dbReference>
<dbReference type="PANTHER" id="PTHR34001">
    <property type="entry name" value="BLL7405 PROTEIN"/>
    <property type="match status" value="1"/>
</dbReference>
<dbReference type="PANTHER" id="PTHR34001:SF3">
    <property type="entry name" value="BLL7405 PROTEIN"/>
    <property type="match status" value="1"/>
</dbReference>
<dbReference type="Pfam" id="PF13505">
    <property type="entry name" value="OMP_b-brl"/>
    <property type="match status" value="1"/>
</dbReference>
<dbReference type="SUPFAM" id="SSF56925">
    <property type="entry name" value="OMPA-like"/>
    <property type="match status" value="1"/>
</dbReference>
<comment type="subcellular location">
    <subcellularLocation>
        <location>Cell outer membrane</location>
    </subcellularLocation>
</comment>
<comment type="domain">
    <text>Has a C-terminal deletion compared to that of other Brucella species.</text>
</comment>
<comment type="similarity">
    <text evidence="2">Belongs to the Omp25/RopB family.</text>
</comment>
<evidence type="ECO:0000255" key="1"/>
<evidence type="ECO:0000305" key="2"/>
<reference key="1">
    <citation type="journal article" date="1996" name="Infect. Immun.">
        <title>Nucleotide sequence and expression of the gene encoding the major 25-kilodalton outer membrane protein of Brucella ovis: evidence for antigenic shift, compared with other Brucella species, due to a deletion in the gene.</title>
        <authorList>
            <person name="Cloeckaert A."/>
            <person name="Verger J.M."/>
            <person name="Grayon M."/>
            <person name="Zygmunt M.S."/>
            <person name="Grepinet O."/>
        </authorList>
    </citation>
    <scope>NUCLEOTIDE SEQUENCE [GENOMIC DNA]</scope>
</reference>
<reference key="2">
    <citation type="journal article" date="2009" name="PLoS ONE">
        <title>Genome degradation in Brucella ovis corresponds with narrowing of its host range and tissue tropism.</title>
        <authorList>
            <person name="Tsolis R.M."/>
            <person name="Seshadri R."/>
            <person name="Santos R.L."/>
            <person name="Sangari F.J."/>
            <person name="Lobo J.M."/>
            <person name="de Jong M.F."/>
            <person name="Ren Q."/>
            <person name="Myers G."/>
            <person name="Brinkac L.M."/>
            <person name="Nelson W.C."/>
            <person name="Deboy R.T."/>
            <person name="Angiuoli S."/>
            <person name="Khouri H."/>
            <person name="Dimitrov G."/>
            <person name="Robinson J.R."/>
            <person name="Mulligan S."/>
            <person name="Walker R.L."/>
            <person name="Elzer P.E."/>
            <person name="Hassan K.A."/>
            <person name="Paulsen I.T."/>
        </authorList>
    </citation>
    <scope>NUCLEOTIDE SEQUENCE [LARGE SCALE GENOMIC DNA]</scope>
    <source>
        <strain>ATCC 25840 / 63/290 / NCTC 10512</strain>
    </source>
</reference>
<gene>
    <name type="primary">omp25</name>
    <name type="ordered locus">BOV_0692</name>
</gene>
<feature type="signal peptide" evidence="1">
    <location>
        <begin position="1"/>
        <end position="23"/>
    </location>
</feature>
<feature type="chain" id="PRO_0000021882" description="25 kDa outer-membrane immunogenic protein">
    <location>
        <begin position="24"/>
        <end position="201"/>
    </location>
</feature>
<proteinExistence type="inferred from homology"/>
<protein>
    <recommendedName>
        <fullName>25 kDa outer-membrane immunogenic protein</fullName>
    </recommendedName>
</protein>
<accession>Q45335</accession>
<accession>A5VPN5</accession>
<organism>
    <name type="scientific">Brucella ovis (strain ATCC 25840 / 63/290 / NCTC 10512)</name>
    <dbReference type="NCBI Taxonomy" id="444178"/>
    <lineage>
        <taxon>Bacteria</taxon>
        <taxon>Pseudomonadati</taxon>
        <taxon>Pseudomonadota</taxon>
        <taxon>Alphaproteobacteria</taxon>
        <taxon>Hyphomicrobiales</taxon>
        <taxon>Brucellaceae</taxon>
        <taxon>Brucella/Ochrobactrum group</taxon>
        <taxon>Brucella</taxon>
    </lineage>
</organism>
<sequence>MRTLKSLVIVSAALLPFSATAFAADAIQEQPPVPAPVEVAPQYSWAGGYTGLYLGYGWNKAKTSTVGSIKPDDWKAGAFAGWNFQQDQIVYGVEGNAGYSWAKKSKDGLEVKQGFEGSLRARVGYDLNPVMPYLTAGIAGSQIKLNNGLDDESKFRVGWTAGAGLEAKLTDNILGRVEYRYTQYGNKLDTQDIRVGIGYKF</sequence>
<keyword id="KW-0998">Cell outer membrane</keyword>
<keyword id="KW-0472">Membrane</keyword>
<keyword id="KW-0732">Signal</keyword>
<keyword id="KW-0812">Transmembrane</keyword>
<keyword id="KW-1134">Transmembrane beta strand</keyword>